<keyword id="KW-0067">ATP-binding</keyword>
<keyword id="KW-0963">Cytoplasm</keyword>
<keyword id="KW-0227">DNA damage</keyword>
<keyword id="KW-0233">DNA recombination</keyword>
<keyword id="KW-0234">DNA repair</keyword>
<keyword id="KW-0238">DNA-binding</keyword>
<keyword id="KW-0547">Nucleotide-binding</keyword>
<keyword id="KW-0742">SOS response</keyword>
<organism>
    <name type="scientific">Marinobacter nauticus (strain ATCC 700491 / DSM 11845 / VT8)</name>
    <name type="common">Marinobacter aquaeolei</name>
    <dbReference type="NCBI Taxonomy" id="351348"/>
    <lineage>
        <taxon>Bacteria</taxon>
        <taxon>Pseudomonadati</taxon>
        <taxon>Pseudomonadota</taxon>
        <taxon>Gammaproteobacteria</taxon>
        <taxon>Pseudomonadales</taxon>
        <taxon>Marinobacteraceae</taxon>
        <taxon>Marinobacter</taxon>
    </lineage>
</organism>
<proteinExistence type="inferred from homology"/>
<protein>
    <recommendedName>
        <fullName evidence="1">Protein RecA</fullName>
    </recommendedName>
    <alternativeName>
        <fullName evidence="1">Recombinase A</fullName>
    </alternativeName>
</protein>
<name>RECA_MARN8</name>
<accession>A1U2E3</accession>
<reference key="1">
    <citation type="journal article" date="2011" name="Appl. Environ. Microbiol.">
        <title>Genomic potential of Marinobacter aquaeolei, a biogeochemical 'opportunitroph'.</title>
        <authorList>
            <person name="Singer E."/>
            <person name="Webb E.A."/>
            <person name="Nelson W.C."/>
            <person name="Heidelberg J.F."/>
            <person name="Ivanova N."/>
            <person name="Pati A."/>
            <person name="Edwards K.J."/>
        </authorList>
    </citation>
    <scope>NUCLEOTIDE SEQUENCE [LARGE SCALE GENOMIC DNA]</scope>
    <source>
        <strain>ATCC 700491 / DSM 11845 / VT8</strain>
    </source>
</reference>
<feature type="chain" id="PRO_1000047942" description="Protein RecA">
    <location>
        <begin position="1"/>
        <end position="347"/>
    </location>
</feature>
<feature type="binding site" evidence="1">
    <location>
        <begin position="65"/>
        <end position="72"/>
    </location>
    <ligand>
        <name>ATP</name>
        <dbReference type="ChEBI" id="CHEBI:30616"/>
    </ligand>
</feature>
<comment type="function">
    <text evidence="1">Can catalyze the hydrolysis of ATP in the presence of single-stranded DNA, the ATP-dependent uptake of single-stranded DNA by duplex DNA, and the ATP-dependent hybridization of homologous single-stranded DNAs. It interacts with LexA causing its activation and leading to its autocatalytic cleavage.</text>
</comment>
<comment type="subcellular location">
    <subcellularLocation>
        <location evidence="1">Cytoplasm</location>
    </subcellularLocation>
</comment>
<comment type="similarity">
    <text evidence="1">Belongs to the RecA family.</text>
</comment>
<gene>
    <name evidence="1" type="primary">recA</name>
    <name type="ordered locus">Maqu_2082</name>
</gene>
<dbReference type="EMBL" id="CP000514">
    <property type="protein sequence ID" value="ABM19162.1"/>
    <property type="molecule type" value="Genomic_DNA"/>
</dbReference>
<dbReference type="RefSeq" id="WP_011785554.1">
    <property type="nucleotide sequence ID" value="NC_008740.1"/>
</dbReference>
<dbReference type="SMR" id="A1U2E3"/>
<dbReference type="STRING" id="351348.Maqu_2082"/>
<dbReference type="GeneID" id="31820686"/>
<dbReference type="KEGG" id="maq:Maqu_2082"/>
<dbReference type="eggNOG" id="COG0468">
    <property type="taxonomic scope" value="Bacteria"/>
</dbReference>
<dbReference type="HOGENOM" id="CLU_040469_3_2_6"/>
<dbReference type="OrthoDB" id="9776733at2"/>
<dbReference type="Proteomes" id="UP000000998">
    <property type="component" value="Chromosome"/>
</dbReference>
<dbReference type="GO" id="GO:0005829">
    <property type="term" value="C:cytosol"/>
    <property type="evidence" value="ECO:0007669"/>
    <property type="project" value="TreeGrafter"/>
</dbReference>
<dbReference type="GO" id="GO:0005524">
    <property type="term" value="F:ATP binding"/>
    <property type="evidence" value="ECO:0007669"/>
    <property type="project" value="UniProtKB-UniRule"/>
</dbReference>
<dbReference type="GO" id="GO:0016887">
    <property type="term" value="F:ATP hydrolysis activity"/>
    <property type="evidence" value="ECO:0007669"/>
    <property type="project" value="InterPro"/>
</dbReference>
<dbReference type="GO" id="GO:0140664">
    <property type="term" value="F:ATP-dependent DNA damage sensor activity"/>
    <property type="evidence" value="ECO:0007669"/>
    <property type="project" value="InterPro"/>
</dbReference>
<dbReference type="GO" id="GO:0003684">
    <property type="term" value="F:damaged DNA binding"/>
    <property type="evidence" value="ECO:0007669"/>
    <property type="project" value="UniProtKB-UniRule"/>
</dbReference>
<dbReference type="GO" id="GO:0003697">
    <property type="term" value="F:single-stranded DNA binding"/>
    <property type="evidence" value="ECO:0007669"/>
    <property type="project" value="UniProtKB-UniRule"/>
</dbReference>
<dbReference type="GO" id="GO:0006310">
    <property type="term" value="P:DNA recombination"/>
    <property type="evidence" value="ECO:0007669"/>
    <property type="project" value="UniProtKB-UniRule"/>
</dbReference>
<dbReference type="GO" id="GO:0006281">
    <property type="term" value="P:DNA repair"/>
    <property type="evidence" value="ECO:0007669"/>
    <property type="project" value="UniProtKB-UniRule"/>
</dbReference>
<dbReference type="GO" id="GO:0009432">
    <property type="term" value="P:SOS response"/>
    <property type="evidence" value="ECO:0007669"/>
    <property type="project" value="UniProtKB-UniRule"/>
</dbReference>
<dbReference type="CDD" id="cd00983">
    <property type="entry name" value="RecA"/>
    <property type="match status" value="1"/>
</dbReference>
<dbReference type="FunFam" id="3.40.50.300:FF:000087">
    <property type="entry name" value="Recombinase RecA"/>
    <property type="match status" value="1"/>
</dbReference>
<dbReference type="Gene3D" id="3.40.50.300">
    <property type="entry name" value="P-loop containing nucleotide triphosphate hydrolases"/>
    <property type="match status" value="1"/>
</dbReference>
<dbReference type="HAMAP" id="MF_00268">
    <property type="entry name" value="RecA"/>
    <property type="match status" value="1"/>
</dbReference>
<dbReference type="InterPro" id="IPR003593">
    <property type="entry name" value="AAA+_ATPase"/>
</dbReference>
<dbReference type="InterPro" id="IPR013765">
    <property type="entry name" value="DNA_recomb/repair_RecA"/>
</dbReference>
<dbReference type="InterPro" id="IPR020584">
    <property type="entry name" value="DNA_recomb/repair_RecA_CS"/>
</dbReference>
<dbReference type="InterPro" id="IPR027417">
    <property type="entry name" value="P-loop_NTPase"/>
</dbReference>
<dbReference type="InterPro" id="IPR049261">
    <property type="entry name" value="RecA-like_C"/>
</dbReference>
<dbReference type="InterPro" id="IPR049428">
    <property type="entry name" value="RecA-like_N"/>
</dbReference>
<dbReference type="InterPro" id="IPR020588">
    <property type="entry name" value="RecA_ATP-bd"/>
</dbReference>
<dbReference type="InterPro" id="IPR023400">
    <property type="entry name" value="RecA_C_sf"/>
</dbReference>
<dbReference type="InterPro" id="IPR020587">
    <property type="entry name" value="RecA_monomer-monomer_interface"/>
</dbReference>
<dbReference type="NCBIfam" id="TIGR02012">
    <property type="entry name" value="tigrfam_recA"/>
    <property type="match status" value="1"/>
</dbReference>
<dbReference type="PANTHER" id="PTHR45900:SF1">
    <property type="entry name" value="MITOCHONDRIAL DNA REPAIR PROTEIN RECA HOMOLOG-RELATED"/>
    <property type="match status" value="1"/>
</dbReference>
<dbReference type="PANTHER" id="PTHR45900">
    <property type="entry name" value="RECA"/>
    <property type="match status" value="1"/>
</dbReference>
<dbReference type="Pfam" id="PF00154">
    <property type="entry name" value="RecA"/>
    <property type="match status" value="1"/>
</dbReference>
<dbReference type="Pfam" id="PF21096">
    <property type="entry name" value="RecA_C"/>
    <property type="match status" value="1"/>
</dbReference>
<dbReference type="PRINTS" id="PR00142">
    <property type="entry name" value="RECA"/>
</dbReference>
<dbReference type="SMART" id="SM00382">
    <property type="entry name" value="AAA"/>
    <property type="match status" value="1"/>
</dbReference>
<dbReference type="SUPFAM" id="SSF52540">
    <property type="entry name" value="P-loop containing nucleoside triphosphate hydrolases"/>
    <property type="match status" value="1"/>
</dbReference>
<dbReference type="SUPFAM" id="SSF54752">
    <property type="entry name" value="RecA protein, C-terminal domain"/>
    <property type="match status" value="1"/>
</dbReference>
<dbReference type="PROSITE" id="PS00321">
    <property type="entry name" value="RECA_1"/>
    <property type="match status" value="1"/>
</dbReference>
<dbReference type="PROSITE" id="PS50162">
    <property type="entry name" value="RECA_2"/>
    <property type="match status" value="1"/>
</dbReference>
<dbReference type="PROSITE" id="PS50163">
    <property type="entry name" value="RECA_3"/>
    <property type="match status" value="1"/>
</dbReference>
<sequence>MEDNRKKALGAALSQIERQFGKGAVMKMGDQPREAIPAVSTGSLGLDVALGIGGLPYGRIVEIYGPESSGKTTLTLQVIAEAQKQGKTCAFVDAEHALDPVYAEKLGVNVDELLVSQPDTGEQALEIADMLVRSNAVDVIIVDSVAALTPKAEIEGEMGDSHVGLQARLMSQALRKLTGNVKHANCLMVFINQIRMKIGVMFGSPETTTGGNALKFYSSVRLDIRRIGSVKDGDEVVGNETRVKVVKNKVSPPFRQAEFQIMYGKGIYHMAEVLDMGVKEGFVDKSGAWYAYNGDKIGQGKANACKFLEENLDIANEIEAKVRDKLMPKPVKKETAEAPAEANGELL</sequence>
<evidence type="ECO:0000255" key="1">
    <source>
        <dbReference type="HAMAP-Rule" id="MF_00268"/>
    </source>
</evidence>